<dbReference type="EC" id="6.1.1.15" evidence="1"/>
<dbReference type="EMBL" id="BX251412">
    <property type="protein sequence ID" value="CAD67254.1"/>
    <property type="molecule type" value="Genomic_DNA"/>
</dbReference>
<dbReference type="RefSeq" id="WP_011096534.1">
    <property type="nucleotide sequence ID" value="NC_004551.1"/>
</dbReference>
<dbReference type="SMR" id="Q83HI1"/>
<dbReference type="GeneID" id="67388371"/>
<dbReference type="KEGG" id="tws:TW588"/>
<dbReference type="HOGENOM" id="CLU_016739_0_0_11"/>
<dbReference type="GO" id="GO:0005829">
    <property type="term" value="C:cytosol"/>
    <property type="evidence" value="ECO:0007669"/>
    <property type="project" value="TreeGrafter"/>
</dbReference>
<dbReference type="GO" id="GO:0002161">
    <property type="term" value="F:aminoacyl-tRNA deacylase activity"/>
    <property type="evidence" value="ECO:0007669"/>
    <property type="project" value="InterPro"/>
</dbReference>
<dbReference type="GO" id="GO:0005524">
    <property type="term" value="F:ATP binding"/>
    <property type="evidence" value="ECO:0007669"/>
    <property type="project" value="UniProtKB-UniRule"/>
</dbReference>
<dbReference type="GO" id="GO:0004827">
    <property type="term" value="F:proline-tRNA ligase activity"/>
    <property type="evidence" value="ECO:0007669"/>
    <property type="project" value="UniProtKB-UniRule"/>
</dbReference>
<dbReference type="GO" id="GO:0006433">
    <property type="term" value="P:prolyl-tRNA aminoacylation"/>
    <property type="evidence" value="ECO:0007669"/>
    <property type="project" value="UniProtKB-UniRule"/>
</dbReference>
<dbReference type="CDD" id="cd00779">
    <property type="entry name" value="ProRS_core_prok"/>
    <property type="match status" value="1"/>
</dbReference>
<dbReference type="Gene3D" id="3.40.50.800">
    <property type="entry name" value="Anticodon-binding domain"/>
    <property type="match status" value="1"/>
</dbReference>
<dbReference type="Gene3D" id="3.30.930.10">
    <property type="entry name" value="Bira Bifunctional Protein, Domain 2"/>
    <property type="match status" value="2"/>
</dbReference>
<dbReference type="Gene3D" id="3.90.960.10">
    <property type="entry name" value="YbaK/aminoacyl-tRNA synthetase-associated domain"/>
    <property type="match status" value="1"/>
</dbReference>
<dbReference type="HAMAP" id="MF_01569">
    <property type="entry name" value="Pro_tRNA_synth_type1"/>
    <property type="match status" value="1"/>
</dbReference>
<dbReference type="InterPro" id="IPR002314">
    <property type="entry name" value="aa-tRNA-synt_IIb"/>
</dbReference>
<dbReference type="InterPro" id="IPR006195">
    <property type="entry name" value="aa-tRNA-synth_II"/>
</dbReference>
<dbReference type="InterPro" id="IPR045864">
    <property type="entry name" value="aa-tRNA-synth_II/BPL/LPL"/>
</dbReference>
<dbReference type="InterPro" id="IPR004154">
    <property type="entry name" value="Anticodon-bd"/>
</dbReference>
<dbReference type="InterPro" id="IPR036621">
    <property type="entry name" value="Anticodon-bd_dom_sf"/>
</dbReference>
<dbReference type="InterPro" id="IPR002316">
    <property type="entry name" value="Pro-tRNA-ligase_IIa"/>
</dbReference>
<dbReference type="InterPro" id="IPR004500">
    <property type="entry name" value="Pro-tRNA-synth_IIa_bac-type"/>
</dbReference>
<dbReference type="InterPro" id="IPR023717">
    <property type="entry name" value="Pro-tRNA-Synthase_IIa_type1"/>
</dbReference>
<dbReference type="InterPro" id="IPR050062">
    <property type="entry name" value="Pro-tRNA_synthetase"/>
</dbReference>
<dbReference type="InterPro" id="IPR033730">
    <property type="entry name" value="ProRS_core_prok"/>
</dbReference>
<dbReference type="InterPro" id="IPR036754">
    <property type="entry name" value="YbaK/aa-tRNA-synt-asso_dom_sf"/>
</dbReference>
<dbReference type="NCBIfam" id="NF006625">
    <property type="entry name" value="PRK09194.1"/>
    <property type="match status" value="1"/>
</dbReference>
<dbReference type="NCBIfam" id="TIGR00409">
    <property type="entry name" value="proS_fam_II"/>
    <property type="match status" value="1"/>
</dbReference>
<dbReference type="PANTHER" id="PTHR42753">
    <property type="entry name" value="MITOCHONDRIAL RIBOSOME PROTEIN L39/PROLYL-TRNA LIGASE FAMILY MEMBER"/>
    <property type="match status" value="1"/>
</dbReference>
<dbReference type="PANTHER" id="PTHR42753:SF2">
    <property type="entry name" value="PROLINE--TRNA LIGASE"/>
    <property type="match status" value="1"/>
</dbReference>
<dbReference type="Pfam" id="PF03129">
    <property type="entry name" value="HGTP_anticodon"/>
    <property type="match status" value="1"/>
</dbReference>
<dbReference type="Pfam" id="PF00587">
    <property type="entry name" value="tRNA-synt_2b"/>
    <property type="match status" value="1"/>
</dbReference>
<dbReference type="PRINTS" id="PR01046">
    <property type="entry name" value="TRNASYNTHPRO"/>
</dbReference>
<dbReference type="SUPFAM" id="SSF52954">
    <property type="entry name" value="Class II aaRS ABD-related"/>
    <property type="match status" value="1"/>
</dbReference>
<dbReference type="SUPFAM" id="SSF55681">
    <property type="entry name" value="Class II aaRS and biotin synthetases"/>
    <property type="match status" value="1"/>
</dbReference>
<dbReference type="SUPFAM" id="SSF55826">
    <property type="entry name" value="YbaK/ProRS associated domain"/>
    <property type="match status" value="1"/>
</dbReference>
<dbReference type="PROSITE" id="PS50862">
    <property type="entry name" value="AA_TRNA_LIGASE_II"/>
    <property type="match status" value="1"/>
</dbReference>
<organism>
    <name type="scientific">Tropheryma whipplei (strain TW08/27)</name>
    <name type="common">Whipple's bacillus</name>
    <dbReference type="NCBI Taxonomy" id="218496"/>
    <lineage>
        <taxon>Bacteria</taxon>
        <taxon>Bacillati</taxon>
        <taxon>Actinomycetota</taxon>
        <taxon>Actinomycetes</taxon>
        <taxon>Micrococcales</taxon>
        <taxon>Tropherymataceae</taxon>
        <taxon>Tropheryma</taxon>
    </lineage>
</organism>
<protein>
    <recommendedName>
        <fullName evidence="1">Proline--tRNA ligase</fullName>
        <ecNumber evidence="1">6.1.1.15</ecNumber>
    </recommendedName>
    <alternativeName>
        <fullName evidence="1">Prolyl-tRNA synthetase</fullName>
        <shortName evidence="1">ProRS</shortName>
    </alternativeName>
</protein>
<reference key="1">
    <citation type="journal article" date="2003" name="Lancet">
        <title>Sequencing and analysis of the genome of the Whipple's disease bacterium Tropheryma whipplei.</title>
        <authorList>
            <person name="Bentley S.D."/>
            <person name="Maiwald M."/>
            <person name="Murphy L.D."/>
            <person name="Pallen M.J."/>
            <person name="Yeats C.A."/>
            <person name="Dover L.G."/>
            <person name="Norbertczak H.T."/>
            <person name="Besra G.S."/>
            <person name="Quail M.A."/>
            <person name="Harris D.E."/>
            <person name="von Herbay A."/>
            <person name="Goble A."/>
            <person name="Rutter S."/>
            <person name="Squares R."/>
            <person name="Squares S."/>
            <person name="Barrell B.G."/>
            <person name="Parkhill J."/>
            <person name="Relman D.A."/>
        </authorList>
    </citation>
    <scope>NUCLEOTIDE SEQUENCE [LARGE SCALE GENOMIC DNA]</scope>
    <source>
        <strain>TW08/27</strain>
    </source>
</reference>
<proteinExistence type="inferred from homology"/>
<feature type="chain" id="PRO_0000248806" description="Proline--tRNA ligase">
    <location>
        <begin position="1"/>
        <end position="601"/>
    </location>
</feature>
<sequence>MITKVSDFLFRTFREDPATTESRGYGFLLRAGYIRQTGSGIFSWMPLGLKVRHKIENIIRYEMRQVNAIEVLFPALFSADLFKQSGRWSEYGDDIFRLKDRRQGDYLLAPTHEEAFTQMMKEICTSYRDLPRTVYQIQDKYRDELRPRAGLLRSREFSMKDAYSFDLDEKGLRQSYEAQKRAYKKIFDRLEIDYVIVKANAGAMGGSVSEEFLHPTEMGDDTFVVTADGSAFNAEVYVTLPGPAIDYSNAPEAEDCETPGVISIPDLVNHMNSSGRFIGRVIESSDCLKCLLFRIEYAEVQNGNPGNLVVKKILERGFEYIGFLVPGDRNVDLKRAQVALSPLTIEPADNRVFECNPSFVRGSIGPGLSGVFYCADPRVSSGSSWIIGANRPGVHRIGAIAGRDFSFDCTLDVSSIKTGDKSEWGPVTVKRGIEIGHLFQLGLKYSNALGLKVLDKDGYNKAVFMGSYGIGVSRLFALIAEKNCDERGLKWPAVLAPFDLHVVLLSSARAELIDSLTDCGLDVLVDDRRVSPGVKFTDAQLIGVPKIIVIGDKTRGEDVEVWDRANDQRTVLPLKEMIQGVIQRSDTGGCTERCTGVCPTR</sequence>
<keyword id="KW-0030">Aminoacyl-tRNA synthetase</keyword>
<keyword id="KW-0067">ATP-binding</keyword>
<keyword id="KW-0963">Cytoplasm</keyword>
<keyword id="KW-0436">Ligase</keyword>
<keyword id="KW-0547">Nucleotide-binding</keyword>
<keyword id="KW-0648">Protein biosynthesis</keyword>
<evidence type="ECO:0000255" key="1">
    <source>
        <dbReference type="HAMAP-Rule" id="MF_01569"/>
    </source>
</evidence>
<comment type="function">
    <text evidence="1">Catalyzes the attachment of proline to tRNA(Pro) in a two-step reaction: proline is first activated by ATP to form Pro-AMP and then transferred to the acceptor end of tRNA(Pro). As ProRS can inadvertently accommodate and process non-cognate amino acids such as alanine and cysteine, to avoid such errors it has two additional distinct editing activities against alanine. One activity is designated as 'pretransfer' editing and involves the tRNA(Pro)-independent hydrolysis of activated Ala-AMP. The other activity is designated 'posttransfer' editing and involves deacylation of mischarged Ala-tRNA(Pro). The misacylated Cys-tRNA(Pro) is not edited by ProRS.</text>
</comment>
<comment type="catalytic activity">
    <reaction evidence="1">
        <text>tRNA(Pro) + L-proline + ATP = L-prolyl-tRNA(Pro) + AMP + diphosphate</text>
        <dbReference type="Rhea" id="RHEA:14305"/>
        <dbReference type="Rhea" id="RHEA-COMP:9700"/>
        <dbReference type="Rhea" id="RHEA-COMP:9702"/>
        <dbReference type="ChEBI" id="CHEBI:30616"/>
        <dbReference type="ChEBI" id="CHEBI:33019"/>
        <dbReference type="ChEBI" id="CHEBI:60039"/>
        <dbReference type="ChEBI" id="CHEBI:78442"/>
        <dbReference type="ChEBI" id="CHEBI:78532"/>
        <dbReference type="ChEBI" id="CHEBI:456215"/>
        <dbReference type="EC" id="6.1.1.15"/>
    </reaction>
</comment>
<comment type="subunit">
    <text evidence="1">Homodimer.</text>
</comment>
<comment type="subcellular location">
    <subcellularLocation>
        <location evidence="1">Cytoplasm</location>
    </subcellularLocation>
</comment>
<comment type="domain">
    <text evidence="1">Consists of three domains: the N-terminal catalytic domain, the editing domain and the C-terminal anticodon-binding domain.</text>
</comment>
<comment type="similarity">
    <text evidence="1">Belongs to the class-II aminoacyl-tRNA synthetase family. ProS type 1 subfamily.</text>
</comment>
<name>SYP_TROW8</name>
<accession>Q83HI1</accession>
<gene>
    <name evidence="1" type="primary">proS</name>
    <name type="ordered locus">TW588</name>
</gene>